<evidence type="ECO:0000255" key="1">
    <source>
        <dbReference type="HAMAP-Rule" id="MF_00044"/>
    </source>
</evidence>
<accession>B0CF01</accession>
<proteinExistence type="inferred from homology"/>
<organism>
    <name type="scientific">Acaryochloris marina (strain MBIC 11017)</name>
    <dbReference type="NCBI Taxonomy" id="329726"/>
    <lineage>
        <taxon>Bacteria</taxon>
        <taxon>Bacillati</taxon>
        <taxon>Cyanobacteriota</taxon>
        <taxon>Cyanophyceae</taxon>
        <taxon>Acaryochloridales</taxon>
        <taxon>Acaryochloridaceae</taxon>
        <taxon>Acaryochloris</taxon>
    </lineage>
</organism>
<reference key="1">
    <citation type="journal article" date="2008" name="Proc. Natl. Acad. Sci. U.S.A.">
        <title>Niche adaptation and genome expansion in the chlorophyll d-producing cyanobacterium Acaryochloris marina.</title>
        <authorList>
            <person name="Swingley W.D."/>
            <person name="Chen M."/>
            <person name="Cheung P.C."/>
            <person name="Conrad A.L."/>
            <person name="Dejesa L.C."/>
            <person name="Hao J."/>
            <person name="Honchak B.M."/>
            <person name="Karbach L.E."/>
            <person name="Kurdoglu A."/>
            <person name="Lahiri S."/>
            <person name="Mastrian S.D."/>
            <person name="Miyashita H."/>
            <person name="Page L."/>
            <person name="Ramakrishna P."/>
            <person name="Satoh S."/>
            <person name="Sattley W.M."/>
            <person name="Shimada Y."/>
            <person name="Taylor H.L."/>
            <person name="Tomo T."/>
            <person name="Tsuchiya T."/>
            <person name="Wang Z.T."/>
            <person name="Raymond J."/>
            <person name="Mimuro M."/>
            <person name="Blankenship R.E."/>
            <person name="Touchman J.W."/>
        </authorList>
    </citation>
    <scope>NUCLEOTIDE SEQUENCE [LARGE SCALE GENOMIC DNA]</scope>
    <source>
        <strain>MBIC 11017</strain>
    </source>
</reference>
<comment type="function">
    <text evidence="1">Aspartyl-tRNA synthetase with relaxed tRNA specificity since it is able to aspartylate not only its cognate tRNA(Asp) but also tRNA(Asn). Reaction proceeds in two steps: L-aspartate is first activated by ATP to form Asp-AMP and then transferred to the acceptor end of tRNA(Asp/Asn).</text>
</comment>
<comment type="catalytic activity">
    <reaction evidence="1">
        <text>tRNA(Asx) + L-aspartate + ATP = L-aspartyl-tRNA(Asx) + AMP + diphosphate</text>
        <dbReference type="Rhea" id="RHEA:18349"/>
        <dbReference type="Rhea" id="RHEA-COMP:9710"/>
        <dbReference type="Rhea" id="RHEA-COMP:9711"/>
        <dbReference type="ChEBI" id="CHEBI:29991"/>
        <dbReference type="ChEBI" id="CHEBI:30616"/>
        <dbReference type="ChEBI" id="CHEBI:33019"/>
        <dbReference type="ChEBI" id="CHEBI:78442"/>
        <dbReference type="ChEBI" id="CHEBI:78516"/>
        <dbReference type="ChEBI" id="CHEBI:456215"/>
        <dbReference type="EC" id="6.1.1.23"/>
    </reaction>
</comment>
<comment type="subunit">
    <text evidence="1">Homodimer.</text>
</comment>
<comment type="subcellular location">
    <subcellularLocation>
        <location evidence="1">Cytoplasm</location>
    </subcellularLocation>
</comment>
<comment type="similarity">
    <text evidence="1">Belongs to the class-II aminoacyl-tRNA synthetase family. Type 1 subfamily.</text>
</comment>
<feature type="chain" id="PRO_1000074689" description="Aspartate--tRNA(Asp/Asn) ligase">
    <location>
        <begin position="1"/>
        <end position="595"/>
    </location>
</feature>
<feature type="region of interest" description="Aspartate" evidence="1">
    <location>
        <begin position="202"/>
        <end position="205"/>
    </location>
</feature>
<feature type="binding site" evidence="1">
    <location>
        <position position="178"/>
    </location>
    <ligand>
        <name>L-aspartate</name>
        <dbReference type="ChEBI" id="CHEBI:29991"/>
    </ligand>
</feature>
<feature type="binding site" evidence="1">
    <location>
        <begin position="224"/>
        <end position="226"/>
    </location>
    <ligand>
        <name>ATP</name>
        <dbReference type="ChEBI" id="CHEBI:30616"/>
    </ligand>
</feature>
<feature type="binding site" evidence="1">
    <location>
        <position position="224"/>
    </location>
    <ligand>
        <name>L-aspartate</name>
        <dbReference type="ChEBI" id="CHEBI:29991"/>
    </ligand>
</feature>
<feature type="binding site" evidence="1">
    <location>
        <position position="233"/>
    </location>
    <ligand>
        <name>ATP</name>
        <dbReference type="ChEBI" id="CHEBI:30616"/>
    </ligand>
</feature>
<feature type="binding site" evidence="1">
    <location>
        <position position="458"/>
    </location>
    <ligand>
        <name>L-aspartate</name>
        <dbReference type="ChEBI" id="CHEBI:29991"/>
    </ligand>
</feature>
<feature type="binding site" evidence="1">
    <location>
        <position position="488"/>
    </location>
    <ligand>
        <name>ATP</name>
        <dbReference type="ChEBI" id="CHEBI:30616"/>
    </ligand>
</feature>
<feature type="binding site" evidence="1">
    <location>
        <position position="495"/>
    </location>
    <ligand>
        <name>L-aspartate</name>
        <dbReference type="ChEBI" id="CHEBI:29991"/>
    </ligand>
</feature>
<feature type="binding site" evidence="1">
    <location>
        <begin position="540"/>
        <end position="543"/>
    </location>
    <ligand>
        <name>ATP</name>
        <dbReference type="ChEBI" id="CHEBI:30616"/>
    </ligand>
</feature>
<feature type="site" description="Important for tRNA non-discrimination" evidence="1">
    <location>
        <position position="30"/>
    </location>
</feature>
<protein>
    <recommendedName>
        <fullName evidence="1">Aspartate--tRNA(Asp/Asn) ligase</fullName>
        <ecNumber evidence="1">6.1.1.23</ecNumber>
    </recommendedName>
    <alternativeName>
        <fullName evidence="1">Aspartyl-tRNA synthetase</fullName>
        <shortName evidence="1">AspRS</shortName>
    </alternativeName>
    <alternativeName>
        <fullName evidence="1">Non-discriminating aspartyl-tRNA synthetase</fullName>
        <shortName evidence="1">ND-AspRS</shortName>
    </alternativeName>
</protein>
<gene>
    <name evidence="1" type="primary">aspS</name>
    <name type="ordered locus">AM1_4421</name>
</gene>
<name>SYDND_ACAM1</name>
<sequence length="595" mass="67537">MRTHYCSELRNDHVGERVTLCGWVDRRRDHGGVIFLDVRDRTGLIQIVSDPERTPEAYPQADALRNEYVVRIHGEVSRRPDDSLNPRLPTGEVEIYADQIELLNAVHQQLPFQVSTADVESVKEELRLKYRYLDLRRDRMHQNIMMRHRLIQSIRRYLEDQQNFVDIETPVLTRSTPEGARDYLVPSRANPGEWFALPQSPQIFKQLLMVSGFDRYYQIARCFRDEDLRADRQPEFTQLDMEMSFMSQEEIIQLNEDLMRHVFKTLKDIDLPKTFPQMTYAEAMERFGTDRPDTRFDLELVNVSDLLEDSGFKVFSGAIKKGGQVKVLPIPDGNAKISNVRIKPGGDLFSEASAGGAKGLAYIRVKDDGAIDTIGAIKDNLSPEQTAELLERTGAKPGHLLLFGAGPTEIVNASLSRLRLALGAEMKLIDPDQIDLLWITEFPMFEWNADEKRLEALHHPFTAPYPEDEADLKTARAQAYDLVYNGLEIGGGSLRIYQADLQRRVFDAIGLSEEEAQDKFGFLLNAFNFGAPPHGGIAYGIDRLAMLLSGEESIRDTIAFPKTQQARCLLTQAPSSVDQKQLKELQIKSTAEPKN</sequence>
<keyword id="KW-0030">Aminoacyl-tRNA synthetase</keyword>
<keyword id="KW-0067">ATP-binding</keyword>
<keyword id="KW-0963">Cytoplasm</keyword>
<keyword id="KW-0436">Ligase</keyword>
<keyword id="KW-0547">Nucleotide-binding</keyword>
<keyword id="KW-0648">Protein biosynthesis</keyword>
<keyword id="KW-1185">Reference proteome</keyword>
<dbReference type="EC" id="6.1.1.23" evidence="1"/>
<dbReference type="EMBL" id="CP000828">
    <property type="protein sequence ID" value="ABW29398.1"/>
    <property type="molecule type" value="Genomic_DNA"/>
</dbReference>
<dbReference type="RefSeq" id="WP_012164720.1">
    <property type="nucleotide sequence ID" value="NC_009925.1"/>
</dbReference>
<dbReference type="SMR" id="B0CF01"/>
<dbReference type="STRING" id="329726.AM1_4421"/>
<dbReference type="KEGG" id="amr:AM1_4421"/>
<dbReference type="eggNOG" id="COG0173">
    <property type="taxonomic scope" value="Bacteria"/>
</dbReference>
<dbReference type="HOGENOM" id="CLU_014330_3_2_3"/>
<dbReference type="OrthoDB" id="9802326at2"/>
<dbReference type="Proteomes" id="UP000000268">
    <property type="component" value="Chromosome"/>
</dbReference>
<dbReference type="GO" id="GO:0005737">
    <property type="term" value="C:cytoplasm"/>
    <property type="evidence" value="ECO:0007669"/>
    <property type="project" value="UniProtKB-SubCell"/>
</dbReference>
<dbReference type="GO" id="GO:0004815">
    <property type="term" value="F:aspartate-tRNA ligase activity"/>
    <property type="evidence" value="ECO:0007669"/>
    <property type="project" value="UniProtKB-UniRule"/>
</dbReference>
<dbReference type="GO" id="GO:0050560">
    <property type="term" value="F:aspartate-tRNA(Asn) ligase activity"/>
    <property type="evidence" value="ECO:0007669"/>
    <property type="project" value="UniProtKB-EC"/>
</dbReference>
<dbReference type="GO" id="GO:0005524">
    <property type="term" value="F:ATP binding"/>
    <property type="evidence" value="ECO:0007669"/>
    <property type="project" value="UniProtKB-UniRule"/>
</dbReference>
<dbReference type="GO" id="GO:0003676">
    <property type="term" value="F:nucleic acid binding"/>
    <property type="evidence" value="ECO:0007669"/>
    <property type="project" value="InterPro"/>
</dbReference>
<dbReference type="GO" id="GO:0006422">
    <property type="term" value="P:aspartyl-tRNA aminoacylation"/>
    <property type="evidence" value="ECO:0007669"/>
    <property type="project" value="UniProtKB-UniRule"/>
</dbReference>
<dbReference type="CDD" id="cd00777">
    <property type="entry name" value="AspRS_core"/>
    <property type="match status" value="1"/>
</dbReference>
<dbReference type="CDD" id="cd04317">
    <property type="entry name" value="EcAspRS_like_N"/>
    <property type="match status" value="1"/>
</dbReference>
<dbReference type="Gene3D" id="3.30.930.10">
    <property type="entry name" value="Bira Bifunctional Protein, Domain 2"/>
    <property type="match status" value="1"/>
</dbReference>
<dbReference type="Gene3D" id="3.30.1360.30">
    <property type="entry name" value="GAD-like domain"/>
    <property type="match status" value="1"/>
</dbReference>
<dbReference type="Gene3D" id="2.40.50.140">
    <property type="entry name" value="Nucleic acid-binding proteins"/>
    <property type="match status" value="1"/>
</dbReference>
<dbReference type="HAMAP" id="MF_00044">
    <property type="entry name" value="Asp_tRNA_synth_type1"/>
    <property type="match status" value="1"/>
</dbReference>
<dbReference type="InterPro" id="IPR004364">
    <property type="entry name" value="Aa-tRNA-synt_II"/>
</dbReference>
<dbReference type="InterPro" id="IPR006195">
    <property type="entry name" value="aa-tRNA-synth_II"/>
</dbReference>
<dbReference type="InterPro" id="IPR045864">
    <property type="entry name" value="aa-tRNA-synth_II/BPL/LPL"/>
</dbReference>
<dbReference type="InterPro" id="IPR004524">
    <property type="entry name" value="Asp-tRNA-ligase_1"/>
</dbReference>
<dbReference type="InterPro" id="IPR047089">
    <property type="entry name" value="Asp-tRNA-ligase_1_N"/>
</dbReference>
<dbReference type="InterPro" id="IPR002312">
    <property type="entry name" value="Asp/Asn-tRNA-synth_IIb"/>
</dbReference>
<dbReference type="InterPro" id="IPR047090">
    <property type="entry name" value="AspRS_core"/>
</dbReference>
<dbReference type="InterPro" id="IPR004115">
    <property type="entry name" value="GAD-like_sf"/>
</dbReference>
<dbReference type="InterPro" id="IPR029351">
    <property type="entry name" value="GAD_dom"/>
</dbReference>
<dbReference type="InterPro" id="IPR012340">
    <property type="entry name" value="NA-bd_OB-fold"/>
</dbReference>
<dbReference type="InterPro" id="IPR004365">
    <property type="entry name" value="NA-bd_OB_tRNA"/>
</dbReference>
<dbReference type="NCBIfam" id="TIGR00459">
    <property type="entry name" value="aspS_bact"/>
    <property type="match status" value="1"/>
</dbReference>
<dbReference type="NCBIfam" id="NF001750">
    <property type="entry name" value="PRK00476.1"/>
    <property type="match status" value="1"/>
</dbReference>
<dbReference type="PANTHER" id="PTHR22594:SF5">
    <property type="entry name" value="ASPARTATE--TRNA LIGASE, MITOCHONDRIAL"/>
    <property type="match status" value="1"/>
</dbReference>
<dbReference type="PANTHER" id="PTHR22594">
    <property type="entry name" value="ASPARTYL/LYSYL-TRNA SYNTHETASE"/>
    <property type="match status" value="1"/>
</dbReference>
<dbReference type="Pfam" id="PF02938">
    <property type="entry name" value="GAD"/>
    <property type="match status" value="1"/>
</dbReference>
<dbReference type="Pfam" id="PF00152">
    <property type="entry name" value="tRNA-synt_2"/>
    <property type="match status" value="1"/>
</dbReference>
<dbReference type="Pfam" id="PF01336">
    <property type="entry name" value="tRNA_anti-codon"/>
    <property type="match status" value="1"/>
</dbReference>
<dbReference type="PRINTS" id="PR01042">
    <property type="entry name" value="TRNASYNTHASP"/>
</dbReference>
<dbReference type="SUPFAM" id="SSF55681">
    <property type="entry name" value="Class II aaRS and biotin synthetases"/>
    <property type="match status" value="1"/>
</dbReference>
<dbReference type="SUPFAM" id="SSF55261">
    <property type="entry name" value="GAD domain-like"/>
    <property type="match status" value="1"/>
</dbReference>
<dbReference type="SUPFAM" id="SSF50249">
    <property type="entry name" value="Nucleic acid-binding proteins"/>
    <property type="match status" value="1"/>
</dbReference>
<dbReference type="PROSITE" id="PS50862">
    <property type="entry name" value="AA_TRNA_LIGASE_II"/>
    <property type="match status" value="1"/>
</dbReference>